<proteinExistence type="evidence at protein level"/>
<comment type="function">
    <text evidence="2">Essential for the fidelity of chromosome transmission. Required for the DNA replication block checkpoint. Replication factor C (RFC) complex has an essential but redundant activity in sister chromatid cohesion establishment. An RFC-like complex (ctf18-RFC) is formed where ctf18 replaces rfc1 in the RFC complex along with the association of dcc1 and ctf8. This complex is required for efficient establishment of chromosome cohesion during S-phase. Acts as a PCNA loader, loading PCNA onto primed templates.</text>
</comment>
<comment type="subunit">
    <text evidence="4">Component of the ctf18-RFC complex which consists of ctf18, ctf8, dcc1, rfc2, rfc3, rfc4 and rfc5.</text>
</comment>
<comment type="subcellular location">
    <subcellularLocation>
        <location evidence="1">Nucleus</location>
    </subcellularLocation>
</comment>
<comment type="similarity">
    <text evidence="3">Belongs to the CTF8 family.</text>
</comment>
<gene>
    <name type="primary">ctf8</name>
    <name type="ORF">SPAC19D5.11c</name>
</gene>
<name>CTF8_SCHPO</name>
<keyword id="KW-0131">Cell cycle</keyword>
<keyword id="KW-0235">DNA replication</keyword>
<keyword id="KW-0238">DNA-binding</keyword>
<keyword id="KW-0539">Nucleus</keyword>
<keyword id="KW-1185">Reference proteome</keyword>
<evidence type="ECO:0000250" key="1"/>
<evidence type="ECO:0000269" key="2">
    <source>
    </source>
</evidence>
<evidence type="ECO:0000305" key="3"/>
<evidence type="ECO:0000305" key="4">
    <source>
    </source>
</evidence>
<protein>
    <recommendedName>
        <fullName>Chromosome transmission fidelity protein 8</fullName>
    </recommendedName>
</protein>
<dbReference type="EMBL" id="CU329670">
    <property type="protein sequence ID" value="CAH25546.1"/>
    <property type="molecule type" value="Genomic_DNA"/>
</dbReference>
<dbReference type="RefSeq" id="NP_001018293.1">
    <property type="nucleotide sequence ID" value="NM_001020333.2"/>
</dbReference>
<dbReference type="SMR" id="Q65ZA6"/>
<dbReference type="BioGRID" id="280632">
    <property type="interactions" value="2"/>
</dbReference>
<dbReference type="FunCoup" id="Q65ZA6">
    <property type="interactions" value="36"/>
</dbReference>
<dbReference type="STRING" id="284812.Q65ZA6"/>
<dbReference type="PaxDb" id="4896-SPAC19D5.11c.1"/>
<dbReference type="EnsemblFungi" id="SPAC19D5.11c.1">
    <property type="protein sequence ID" value="SPAC19D5.11c.1:pep"/>
    <property type="gene ID" value="SPAC19D5.11c"/>
</dbReference>
<dbReference type="GeneID" id="3361556"/>
<dbReference type="KEGG" id="spo:3361556"/>
<dbReference type="PomBase" id="SPAC19D5.11c">
    <property type="gene designation" value="ctf8"/>
</dbReference>
<dbReference type="VEuPathDB" id="FungiDB:SPAC19D5.11c"/>
<dbReference type="HOGENOM" id="CLU_2238175_0_0_1"/>
<dbReference type="InParanoid" id="Q65ZA6"/>
<dbReference type="OMA" id="GNQCMEG"/>
<dbReference type="PRO" id="PR:Q65ZA6"/>
<dbReference type="Proteomes" id="UP000002485">
    <property type="component" value="Chromosome I"/>
</dbReference>
<dbReference type="GO" id="GO:0000785">
    <property type="term" value="C:chromatin"/>
    <property type="evidence" value="ECO:0000305"/>
    <property type="project" value="PomBase"/>
</dbReference>
<dbReference type="GO" id="GO:0031390">
    <property type="term" value="C:Ctf18 RFC-like complex"/>
    <property type="evidence" value="ECO:0000266"/>
    <property type="project" value="PomBase"/>
</dbReference>
<dbReference type="GO" id="GO:0016887">
    <property type="term" value="F:ATP hydrolysis activity"/>
    <property type="evidence" value="ECO:0000305"/>
    <property type="project" value="PomBase"/>
</dbReference>
<dbReference type="GO" id="GO:0003677">
    <property type="term" value="F:DNA binding"/>
    <property type="evidence" value="ECO:0007669"/>
    <property type="project" value="UniProtKB-KW"/>
</dbReference>
<dbReference type="GO" id="GO:0006260">
    <property type="term" value="P:DNA replication"/>
    <property type="evidence" value="ECO:0007669"/>
    <property type="project" value="UniProtKB-KW"/>
</dbReference>
<dbReference type="GO" id="GO:0007064">
    <property type="term" value="P:mitotic sister chromatid cohesion"/>
    <property type="evidence" value="ECO:0000266"/>
    <property type="project" value="PomBase"/>
</dbReference>
<dbReference type="InterPro" id="IPR018607">
    <property type="entry name" value="Ctf8"/>
</dbReference>
<dbReference type="PANTHER" id="PTHR47475">
    <property type="entry name" value="CHROMOSOME TRANSMISSION FIDELITY PROTEIN 8"/>
    <property type="match status" value="1"/>
</dbReference>
<dbReference type="PANTHER" id="PTHR47475:SF2">
    <property type="entry name" value="CHROMOSOME TRANSMISSION FIDELITY PROTEIN 8"/>
    <property type="match status" value="1"/>
</dbReference>
<dbReference type="Pfam" id="PF09696">
    <property type="entry name" value="Ctf8"/>
    <property type="match status" value="1"/>
</dbReference>
<sequence length="109" mass="12365">MSEIRLIRAINDELYLVEVQATLERKADSLHIGDLKIIKEKNSEKKKATLTVGNQYMEGVVESLKKPLAVLQKTNADPVDVYSSPSHELKCCSIIRERIRFSSRPLPTK</sequence>
<feature type="chain" id="PRO_0000239056" description="Chromosome transmission fidelity protein 8">
    <location>
        <begin position="1"/>
        <end position="109"/>
    </location>
</feature>
<reference key="1">
    <citation type="journal article" date="2002" name="Nature">
        <title>The genome sequence of Schizosaccharomyces pombe.</title>
        <authorList>
            <person name="Wood V."/>
            <person name="Gwilliam R."/>
            <person name="Rajandream M.A."/>
            <person name="Lyne M.H."/>
            <person name="Lyne R."/>
            <person name="Stewart A."/>
            <person name="Sgouros J.G."/>
            <person name="Peat N."/>
            <person name="Hayles J."/>
            <person name="Baker S.G."/>
            <person name="Basham D."/>
            <person name="Bowman S."/>
            <person name="Brooks K."/>
            <person name="Brown D."/>
            <person name="Brown S."/>
            <person name="Chillingworth T."/>
            <person name="Churcher C.M."/>
            <person name="Collins M."/>
            <person name="Connor R."/>
            <person name="Cronin A."/>
            <person name="Davis P."/>
            <person name="Feltwell T."/>
            <person name="Fraser A."/>
            <person name="Gentles S."/>
            <person name="Goble A."/>
            <person name="Hamlin N."/>
            <person name="Harris D.E."/>
            <person name="Hidalgo J."/>
            <person name="Hodgson G."/>
            <person name="Holroyd S."/>
            <person name="Hornsby T."/>
            <person name="Howarth S."/>
            <person name="Huckle E.J."/>
            <person name="Hunt S."/>
            <person name="Jagels K."/>
            <person name="James K.D."/>
            <person name="Jones L."/>
            <person name="Jones M."/>
            <person name="Leather S."/>
            <person name="McDonald S."/>
            <person name="McLean J."/>
            <person name="Mooney P."/>
            <person name="Moule S."/>
            <person name="Mungall K.L."/>
            <person name="Murphy L.D."/>
            <person name="Niblett D."/>
            <person name="Odell C."/>
            <person name="Oliver K."/>
            <person name="O'Neil S."/>
            <person name="Pearson D."/>
            <person name="Quail M.A."/>
            <person name="Rabbinowitsch E."/>
            <person name="Rutherford K.M."/>
            <person name="Rutter S."/>
            <person name="Saunders D."/>
            <person name="Seeger K."/>
            <person name="Sharp S."/>
            <person name="Skelton J."/>
            <person name="Simmonds M.N."/>
            <person name="Squares R."/>
            <person name="Squares S."/>
            <person name="Stevens K."/>
            <person name="Taylor K."/>
            <person name="Taylor R.G."/>
            <person name="Tivey A."/>
            <person name="Walsh S.V."/>
            <person name="Warren T."/>
            <person name="Whitehead S."/>
            <person name="Woodward J.R."/>
            <person name="Volckaert G."/>
            <person name="Aert R."/>
            <person name="Robben J."/>
            <person name="Grymonprez B."/>
            <person name="Weltjens I."/>
            <person name="Vanstreels E."/>
            <person name="Rieger M."/>
            <person name="Schaefer M."/>
            <person name="Mueller-Auer S."/>
            <person name="Gabel C."/>
            <person name="Fuchs M."/>
            <person name="Duesterhoeft A."/>
            <person name="Fritzc C."/>
            <person name="Holzer E."/>
            <person name="Moestl D."/>
            <person name="Hilbert H."/>
            <person name="Borzym K."/>
            <person name="Langer I."/>
            <person name="Beck A."/>
            <person name="Lehrach H."/>
            <person name="Reinhardt R."/>
            <person name="Pohl T.M."/>
            <person name="Eger P."/>
            <person name="Zimmermann W."/>
            <person name="Wedler H."/>
            <person name="Wambutt R."/>
            <person name="Purnelle B."/>
            <person name="Goffeau A."/>
            <person name="Cadieu E."/>
            <person name="Dreano S."/>
            <person name="Gloux S."/>
            <person name="Lelaure V."/>
            <person name="Mottier S."/>
            <person name="Galibert F."/>
            <person name="Aves S.J."/>
            <person name="Xiang Z."/>
            <person name="Hunt C."/>
            <person name="Moore K."/>
            <person name="Hurst S.M."/>
            <person name="Lucas M."/>
            <person name="Rochet M."/>
            <person name="Gaillardin C."/>
            <person name="Tallada V.A."/>
            <person name="Garzon A."/>
            <person name="Thode G."/>
            <person name="Daga R.R."/>
            <person name="Cruzado L."/>
            <person name="Jimenez J."/>
            <person name="Sanchez M."/>
            <person name="del Rey F."/>
            <person name="Benito J."/>
            <person name="Dominguez A."/>
            <person name="Revuelta J.L."/>
            <person name="Moreno S."/>
            <person name="Armstrong J."/>
            <person name="Forsburg S.L."/>
            <person name="Cerutti L."/>
            <person name="Lowe T."/>
            <person name="McCombie W.R."/>
            <person name="Paulsen I."/>
            <person name="Potashkin J."/>
            <person name="Shpakovski G.V."/>
            <person name="Ussery D."/>
            <person name="Barrell B.G."/>
            <person name="Nurse P."/>
        </authorList>
    </citation>
    <scope>NUCLEOTIDE SEQUENCE [LARGE SCALE GENOMIC DNA]</scope>
    <source>
        <strain>972 / ATCC 24843</strain>
    </source>
</reference>
<reference key="2">
    <citation type="journal article" date="2004" name="J. Cell Sci.">
        <title>Sister-chromatid cohesion mediated by the alternative RF-CCtf18/Dcc1/Ctf8, the helicase Chl1 and the polymerase-alpha-associated protein Ctf4 is essential for chromatid disjunction during meiosis II.</title>
        <authorList>
            <person name="Petronczki M."/>
            <person name="Chwalla B."/>
            <person name="Siomos M.F."/>
            <person name="Yokobayashi S."/>
            <person name="Helmhart W."/>
            <person name="Deutschbauer A.M."/>
            <person name="Davis R.W."/>
            <person name="Watanabe Y."/>
            <person name="Nasmyth K."/>
        </authorList>
    </citation>
    <scope>FUNCTION</scope>
    <scope>IDENTIFICATION IN THE RFC COMPLEX</scope>
</reference>
<organism>
    <name type="scientific">Schizosaccharomyces pombe (strain 972 / ATCC 24843)</name>
    <name type="common">Fission yeast</name>
    <dbReference type="NCBI Taxonomy" id="284812"/>
    <lineage>
        <taxon>Eukaryota</taxon>
        <taxon>Fungi</taxon>
        <taxon>Dikarya</taxon>
        <taxon>Ascomycota</taxon>
        <taxon>Taphrinomycotina</taxon>
        <taxon>Schizosaccharomycetes</taxon>
        <taxon>Schizosaccharomycetales</taxon>
        <taxon>Schizosaccharomycetaceae</taxon>
        <taxon>Schizosaccharomyces</taxon>
    </lineage>
</organism>
<accession>Q65ZA6</accession>